<dbReference type="EC" id="7.1.1.6"/>
<dbReference type="EMBL" id="X76299">
    <property type="protein sequence ID" value="CAA53947.1"/>
    <property type="molecule type" value="Genomic_DNA"/>
</dbReference>
<dbReference type="EMBL" id="D32003">
    <property type="protein sequence ID" value="BAA22147.1"/>
    <property type="molecule type" value="mRNA"/>
</dbReference>
<dbReference type="PIR" id="A53412">
    <property type="entry name" value="A53412"/>
</dbReference>
<dbReference type="RefSeq" id="XP_001698786.1">
    <property type="nucleotide sequence ID" value="XM_001698734.1"/>
</dbReference>
<dbReference type="PDB" id="1Q90">
    <property type="method" value="X-ray"/>
    <property type="resolution" value="3.10 A"/>
    <property type="chains" value="C=80-206, R=31-79"/>
</dbReference>
<dbReference type="PDBsum" id="1Q90"/>
<dbReference type="SMR" id="P49728"/>
<dbReference type="DIP" id="DIP-58594N"/>
<dbReference type="IntAct" id="P49728">
    <property type="interactions" value="2"/>
</dbReference>
<dbReference type="PaxDb" id="3055-EDO99286"/>
<dbReference type="EnsemblPlants" id="PNW76554">
    <property type="protein sequence ID" value="PNW76554"/>
    <property type="gene ID" value="CHLRE_11g467689v5"/>
</dbReference>
<dbReference type="Gramene" id="PNW76554">
    <property type="protein sequence ID" value="PNW76554"/>
    <property type="gene ID" value="CHLRE_11g467689v5"/>
</dbReference>
<dbReference type="eggNOG" id="KOG1671">
    <property type="taxonomic scope" value="Eukaryota"/>
</dbReference>
<dbReference type="HOGENOM" id="CLU_055690_8_0_1"/>
<dbReference type="OMA" id="FTPWTET"/>
<dbReference type="OrthoDB" id="1637982at2759"/>
<dbReference type="BioCyc" id="CHLAMY:CHLREDRAFT_193296-MONOMER"/>
<dbReference type="BioCyc" id="MetaCyc:CHLREDRAFT_193296-MONOMER"/>
<dbReference type="EvolutionaryTrace" id="P49728"/>
<dbReference type="GO" id="GO:0009535">
    <property type="term" value="C:chloroplast thylakoid membrane"/>
    <property type="evidence" value="ECO:0007669"/>
    <property type="project" value="UniProtKB-SubCell"/>
</dbReference>
<dbReference type="GO" id="GO:0051537">
    <property type="term" value="F:2 iron, 2 sulfur cluster binding"/>
    <property type="evidence" value="ECO:0007669"/>
    <property type="project" value="UniProtKB-KW"/>
</dbReference>
<dbReference type="GO" id="GO:0046872">
    <property type="term" value="F:metal ion binding"/>
    <property type="evidence" value="ECO:0007669"/>
    <property type="project" value="UniProtKB-KW"/>
</dbReference>
<dbReference type="GO" id="GO:0009496">
    <property type="term" value="F:plastoquinol--plastocyanin reductase activity"/>
    <property type="evidence" value="ECO:0007669"/>
    <property type="project" value="UniProtKB-EC"/>
</dbReference>
<dbReference type="CDD" id="cd03471">
    <property type="entry name" value="Rieske_cytochrome_b6f"/>
    <property type="match status" value="1"/>
</dbReference>
<dbReference type="FunFam" id="2.102.10.10:FF:000007">
    <property type="entry name" value="Cytochrome b6-f complex iron-sulfur subunit"/>
    <property type="match status" value="1"/>
</dbReference>
<dbReference type="Gene3D" id="2.102.10.10">
    <property type="entry name" value="Rieske [2Fe-2S] iron-sulphur domain"/>
    <property type="match status" value="1"/>
</dbReference>
<dbReference type="Gene3D" id="1.20.5.700">
    <property type="entry name" value="Single helix bin"/>
    <property type="match status" value="1"/>
</dbReference>
<dbReference type="InterPro" id="IPR017941">
    <property type="entry name" value="Rieske_2Fe-2S"/>
</dbReference>
<dbReference type="InterPro" id="IPR036922">
    <property type="entry name" value="Rieske_2Fe-2S_sf"/>
</dbReference>
<dbReference type="InterPro" id="IPR014349">
    <property type="entry name" value="Rieske_Fe-S_prot"/>
</dbReference>
<dbReference type="InterPro" id="IPR005805">
    <property type="entry name" value="Rieske_Fe-S_prot_C"/>
</dbReference>
<dbReference type="NCBIfam" id="NF010001">
    <property type="entry name" value="PRK13474.1"/>
    <property type="match status" value="1"/>
</dbReference>
<dbReference type="PANTHER" id="PTHR10134">
    <property type="entry name" value="CYTOCHROME B-C1 COMPLEX SUBUNIT RIESKE, MITOCHONDRIAL"/>
    <property type="match status" value="1"/>
</dbReference>
<dbReference type="Pfam" id="PF00355">
    <property type="entry name" value="Rieske"/>
    <property type="match status" value="1"/>
</dbReference>
<dbReference type="Pfam" id="PF25471">
    <property type="entry name" value="TM_PetC"/>
    <property type="match status" value="1"/>
</dbReference>
<dbReference type="PRINTS" id="PR00162">
    <property type="entry name" value="RIESKE"/>
</dbReference>
<dbReference type="SUPFAM" id="SSF50022">
    <property type="entry name" value="ISP domain"/>
    <property type="match status" value="1"/>
</dbReference>
<dbReference type="SUPFAM" id="SSF81502">
    <property type="entry name" value="ISP transmembrane anchor"/>
    <property type="match status" value="1"/>
</dbReference>
<dbReference type="PROSITE" id="PS51296">
    <property type="entry name" value="RIESKE"/>
    <property type="match status" value="1"/>
</dbReference>
<feature type="transit peptide" description="Chloroplast" evidence="2">
    <location>
        <begin position="1"/>
        <end position="29"/>
    </location>
</feature>
<feature type="chain" id="PRO_0000030685" description="Cytochrome b6-f complex iron-sulfur subunit, chloroplastic">
    <location>
        <begin position="30"/>
        <end position="206"/>
    </location>
</feature>
<feature type="transmembrane region" description="Helical">
    <location>
        <begin position="39"/>
        <end position="68"/>
    </location>
</feature>
<feature type="domain" description="Rieske" evidence="1">
    <location>
        <begin position="92"/>
        <end position="188"/>
    </location>
</feature>
<feature type="binding site">
    <location>
        <position position="134"/>
    </location>
    <ligand>
        <name>[2Fe-2S] cluster</name>
        <dbReference type="ChEBI" id="CHEBI:190135"/>
    </ligand>
</feature>
<feature type="binding site">
    <location>
        <position position="136"/>
    </location>
    <ligand>
        <name>[2Fe-2S] cluster</name>
        <dbReference type="ChEBI" id="CHEBI:190135"/>
    </ligand>
</feature>
<feature type="binding site">
    <location>
        <position position="152"/>
    </location>
    <ligand>
        <name>[2Fe-2S] cluster</name>
        <dbReference type="ChEBI" id="CHEBI:190135"/>
    </ligand>
</feature>
<feature type="binding site">
    <location>
        <position position="155"/>
    </location>
    <ligand>
        <name>[2Fe-2S] cluster</name>
        <dbReference type="ChEBI" id="CHEBI:190135"/>
    </ligand>
</feature>
<feature type="disulfide bond">
    <location>
        <begin position="139"/>
        <end position="154"/>
    </location>
</feature>
<feature type="helix" evidence="4">
    <location>
        <begin position="39"/>
        <end position="68"/>
    </location>
</feature>
<feature type="helix" evidence="4">
    <location>
        <begin position="92"/>
        <end position="98"/>
    </location>
</feature>
<feature type="helix" evidence="4">
    <location>
        <begin position="110"/>
        <end position="112"/>
    </location>
</feature>
<feature type="strand" evidence="4">
    <location>
        <begin position="114"/>
        <end position="119"/>
    </location>
</feature>
<feature type="strand" evidence="4">
    <location>
        <begin position="123"/>
        <end position="125"/>
    </location>
</feature>
<feature type="strand" evidence="4">
    <location>
        <begin position="127"/>
        <end position="131"/>
    </location>
</feature>
<feature type="turn" evidence="4">
    <location>
        <begin position="135"/>
        <end position="137"/>
    </location>
</feature>
<feature type="turn" evidence="4">
    <location>
        <begin position="145"/>
        <end position="148"/>
    </location>
</feature>
<feature type="strand" evidence="4">
    <location>
        <begin position="149"/>
        <end position="151"/>
    </location>
</feature>
<feature type="turn" evidence="4">
    <location>
        <begin position="153"/>
        <end position="155"/>
    </location>
</feature>
<feature type="strand" evidence="4">
    <location>
        <begin position="158"/>
        <end position="160"/>
    </location>
</feature>
<feature type="strand" evidence="4">
    <location>
        <begin position="165"/>
        <end position="169"/>
    </location>
</feature>
<feature type="strand" evidence="4">
    <location>
        <begin position="176"/>
        <end position="180"/>
    </location>
</feature>
<feature type="strand" evidence="4">
    <location>
        <begin position="188"/>
        <end position="191"/>
    </location>
</feature>
<feature type="turn" evidence="4">
    <location>
        <begin position="197"/>
        <end position="199"/>
    </location>
</feature>
<organism>
    <name type="scientific">Chlamydomonas reinhardtii</name>
    <name type="common">Chlamydomonas smithii</name>
    <dbReference type="NCBI Taxonomy" id="3055"/>
    <lineage>
        <taxon>Eukaryota</taxon>
        <taxon>Viridiplantae</taxon>
        <taxon>Chlorophyta</taxon>
        <taxon>core chlorophytes</taxon>
        <taxon>Chlorophyceae</taxon>
        <taxon>CS clade</taxon>
        <taxon>Chlamydomonadales</taxon>
        <taxon>Chlamydomonadaceae</taxon>
        <taxon>Chlamydomonas</taxon>
    </lineage>
</organism>
<accession>P49728</accession>
<protein>
    <recommendedName>
        <fullName>Cytochrome b6-f complex iron-sulfur subunit, chloroplastic</fullName>
        <ecNumber>7.1.1.6</ecNumber>
    </recommendedName>
    <alternativeName>
        <fullName>Plastohydroquinone:plastocyanin oxidoreductase iron-sulfur protein</fullName>
    </alternativeName>
    <alternativeName>
        <fullName>Rieske iron-sulfur protein</fullName>
        <shortName>ISP</shortName>
        <shortName>RISP</shortName>
    </alternativeName>
</protein>
<gene>
    <name type="primary">petC</name>
</gene>
<name>UCRIA_CHLRE</name>
<keyword id="KW-0001">2Fe-2S</keyword>
<keyword id="KW-0002">3D-structure</keyword>
<keyword id="KW-0150">Chloroplast</keyword>
<keyword id="KW-0903">Direct protein sequencing</keyword>
<keyword id="KW-1015">Disulfide bond</keyword>
<keyword id="KW-0249">Electron transport</keyword>
<keyword id="KW-0408">Iron</keyword>
<keyword id="KW-0411">Iron-sulfur</keyword>
<keyword id="KW-0472">Membrane</keyword>
<keyword id="KW-0479">Metal-binding</keyword>
<keyword id="KW-0934">Plastid</keyword>
<keyword id="KW-0793">Thylakoid</keyword>
<keyword id="KW-0809">Transit peptide</keyword>
<keyword id="KW-1278">Translocase</keyword>
<keyword id="KW-0812">Transmembrane</keyword>
<keyword id="KW-1133">Transmembrane helix</keyword>
<keyword id="KW-0813">Transport</keyword>
<sequence>MAMLSSRRVAAPAKASAIRRSRVMPVVRAAAASSEVPDMNKRNIMNLILAGGAGLPITTLALGYGAFFVPPSSGGGGGGQAAKDALGNDIKAGEWLKTHLAGDRSLSQGLKGDPTYLIVTADSTIEKYGLNAVCTHLGCVVPWVAAENKFKCPCHGSQYNAEGKVVRGPAPLSLALAHCDVAESGLVTFSTWTETDFRTGLEPWWA</sequence>
<reference key="1">
    <citation type="journal article" date="1994" name="J. Biol. Chem.">
        <title>Characterization of the gene of the chloroplast Rieske iron-sulfur protein in Chlamydomonas reinhardtii. Indications for an uncleaved lumen targeting sequence.</title>
        <authorList>
            <person name="de Vitry C."/>
        </authorList>
    </citation>
    <scope>NUCLEOTIDE SEQUENCE [GENOMIC DNA]</scope>
    <source>
        <strain>cw15</strain>
    </source>
</reference>
<reference key="2">
    <citation type="submission" date="1997-09" db="EMBL/GenBank/DDBJ databases">
        <title>A cDNA encoding chloroplast Rieske protein from Chlamydomonas reinhardtii.</title>
        <authorList>
            <person name="Takahashi Y."/>
            <person name="Kataoka S."/>
            <person name="Matsubara H."/>
            <person name="Malkin R."/>
        </authorList>
    </citation>
    <scope>NUCLEOTIDE SEQUENCE</scope>
    <source>
        <strain>2137</strain>
    </source>
</reference>
<reference key="3">
    <citation type="journal article" date="1995" name="J. Biol. Chem.">
        <title>Purification and characterization of the cytochrome b6 f complex from Chlamydomonas reinhardtii.</title>
        <authorList>
            <person name="Pierre Y."/>
            <person name="Breyton C."/>
            <person name="Kramer D."/>
            <person name="Popot J.-L."/>
        </authorList>
    </citation>
    <scope>PROTEIN SEQUENCE OF 30-56 AND 168-186</scope>
    <scope>CHARACTERIZATION</scope>
    <source>
        <strain>WT12</strain>
    </source>
</reference>
<reference key="4">
    <citation type="journal article" date="2003" name="Nature">
        <title>An atypical haem in the cytochrome b(6)f complex.</title>
        <authorList>
            <person name="Stroebel D."/>
            <person name="Choquet Y."/>
            <person name="Popot J.-L."/>
            <person name="Picot D."/>
        </authorList>
    </citation>
    <scope>X-RAY CRYSTALLOGRAPHY (3.1 ANGSTROMS) OF 31-206</scope>
</reference>
<comment type="function">
    <text>Component of the cytochrome b6-f complex, which mediates electron transfer between photosystem II (PSII) and photosystem I (PSI), cyclic electron flow around PSI, and state transitions.</text>
</comment>
<comment type="catalytic activity">
    <reaction>
        <text>2 oxidized [plastocyanin] + a plastoquinol + 2 H(+)(in) = 2 reduced [plastocyanin] + a plastoquinone + 4 H(+)(out)</text>
        <dbReference type="Rhea" id="RHEA:22148"/>
        <dbReference type="Rhea" id="RHEA-COMP:9561"/>
        <dbReference type="Rhea" id="RHEA-COMP:9562"/>
        <dbReference type="Rhea" id="RHEA-COMP:10039"/>
        <dbReference type="Rhea" id="RHEA-COMP:10040"/>
        <dbReference type="ChEBI" id="CHEBI:15378"/>
        <dbReference type="ChEBI" id="CHEBI:17757"/>
        <dbReference type="ChEBI" id="CHEBI:29036"/>
        <dbReference type="ChEBI" id="CHEBI:49552"/>
        <dbReference type="ChEBI" id="CHEBI:62192"/>
        <dbReference type="EC" id="7.1.1.6"/>
    </reaction>
</comment>
<comment type="cofactor">
    <cofactor>
        <name>[2Fe-2S] cluster</name>
        <dbReference type="ChEBI" id="CHEBI:190135"/>
    </cofactor>
    <text>Binds 1 [2Fe-2S] cluster per subunit.</text>
</comment>
<comment type="subunit">
    <text>The 4 large subunits of the cytochrome b6-f complex are cytochrome b6, subunit IV (17 kDa polypeptide, petD), cytochrome f and the Rieske protein, while the 4 small subunits are petG, petL, petM and petN. The complex functions as a dimer.</text>
</comment>
<comment type="subcellular location">
    <subcellularLocation>
        <location>Plastid</location>
        <location>Chloroplast thylakoid membrane</location>
        <topology>Single-pass membrane protein</topology>
    </subcellularLocation>
    <text>The transmembrane helix obliquely spans the membrane in one monomer, and its extrinsic C-terminal domain is part of the other monomer.</text>
</comment>
<comment type="miscellaneous">
    <text>This protein is 1 of 2 subunits of the cytochrome b6-f complex that are encoded in the nucleus.</text>
</comment>
<comment type="miscellaneous">
    <text>The Rieske iron-sulfur protein is a high potential 2Fe-2S protein.</text>
</comment>
<comment type="similarity">
    <text evidence="3">Belongs to the Rieske iron-sulfur protein family.</text>
</comment>
<proteinExistence type="evidence at protein level"/>
<evidence type="ECO:0000255" key="1">
    <source>
        <dbReference type="PROSITE-ProRule" id="PRU00628"/>
    </source>
</evidence>
<evidence type="ECO:0000269" key="2">
    <source>
    </source>
</evidence>
<evidence type="ECO:0000305" key="3"/>
<evidence type="ECO:0007829" key="4">
    <source>
        <dbReference type="PDB" id="1Q90"/>
    </source>
</evidence>